<dbReference type="EC" id="5.6.2.1"/>
<dbReference type="EC" id="2.7.7.101" evidence="3"/>
<dbReference type="EMBL" id="M28829">
    <property type="protein sequence ID" value="AAA26445.1"/>
    <property type="molecule type" value="Genomic_DNA"/>
</dbReference>
<dbReference type="EMBL" id="X04830">
    <property type="protein sequence ID" value="CAA28520.1"/>
    <property type="molecule type" value="Genomic_DNA"/>
</dbReference>
<dbReference type="EMBL" id="S96966">
    <property type="protein sequence ID" value="AAB22064.1"/>
    <property type="molecule type" value="Genomic_DNA"/>
</dbReference>
<dbReference type="PIR" id="JH0126">
    <property type="entry name" value="JH0126"/>
</dbReference>
<dbReference type="RefSeq" id="NP_044304.1">
    <property type="nucleotide sequence ID" value="NC_001740.1"/>
</dbReference>
<dbReference type="PDB" id="2NS6">
    <property type="method" value="X-ray"/>
    <property type="resolution" value="2.10 A"/>
    <property type="chains" value="A=2-186"/>
</dbReference>
<dbReference type="PDBsum" id="2NS6"/>
<dbReference type="SMR" id="P07112"/>
<dbReference type="IntAct" id="P07112">
    <property type="interactions" value="1"/>
</dbReference>
<dbReference type="BindingDB" id="P07112"/>
<dbReference type="ChEMBL" id="CHEMBL5420"/>
<dbReference type="PRO" id="PR:P07112"/>
<dbReference type="GO" id="GO:0005737">
    <property type="term" value="C:cytoplasm"/>
    <property type="evidence" value="ECO:0007669"/>
    <property type="project" value="UniProtKB-SubCell"/>
</dbReference>
<dbReference type="GO" id="GO:0000428">
    <property type="term" value="C:DNA-directed RNA polymerase complex"/>
    <property type="evidence" value="ECO:0007669"/>
    <property type="project" value="UniProtKB-KW"/>
</dbReference>
<dbReference type="GO" id="GO:0003677">
    <property type="term" value="F:DNA binding"/>
    <property type="evidence" value="ECO:0007669"/>
    <property type="project" value="UniProtKB-KW"/>
</dbReference>
<dbReference type="GO" id="GO:0003917">
    <property type="term" value="F:DNA topoisomerase type I (single strand cut, ATP-independent) activity"/>
    <property type="evidence" value="ECO:0007669"/>
    <property type="project" value="UniProtKB-EC"/>
</dbReference>
<dbReference type="GO" id="GO:0046872">
    <property type="term" value="F:metal ion binding"/>
    <property type="evidence" value="ECO:0007669"/>
    <property type="project" value="UniProtKB-KW"/>
</dbReference>
<dbReference type="GO" id="GO:0016740">
    <property type="term" value="F:transferase activity"/>
    <property type="evidence" value="ECO:0007669"/>
    <property type="project" value="UniProtKB-KW"/>
</dbReference>
<dbReference type="Gene3D" id="1.10.1240.50">
    <property type="match status" value="1"/>
</dbReference>
<dbReference type="Gene3D" id="3.30.930.30">
    <property type="match status" value="1"/>
</dbReference>
<dbReference type="Gene3D" id="3.30.1490.240">
    <property type="entry name" value="RepB DNA-primase, N-terminal domain"/>
    <property type="match status" value="1"/>
</dbReference>
<dbReference type="Gene3D" id="3.30.70.1790">
    <property type="entry name" value="RepB DNA-primase, N-terminal domain"/>
    <property type="match status" value="1"/>
</dbReference>
<dbReference type="Gene3D" id="1.20.5.460">
    <property type="entry name" value="Single helix bin"/>
    <property type="match status" value="1"/>
</dbReference>
<dbReference type="InterPro" id="IPR005053">
    <property type="entry name" value="MobA_MobL"/>
</dbReference>
<dbReference type="InterPro" id="IPR039459">
    <property type="entry name" value="RepB-like_DNA_primase_dom"/>
</dbReference>
<dbReference type="InterPro" id="IPR054366">
    <property type="entry name" value="RepB/MobA-like_C"/>
</dbReference>
<dbReference type="Pfam" id="PF03389">
    <property type="entry name" value="MobA_MobL"/>
    <property type="match status" value="1"/>
</dbReference>
<dbReference type="Pfam" id="PF16793">
    <property type="entry name" value="RepB_primase"/>
    <property type="match status" value="1"/>
</dbReference>
<dbReference type="Pfam" id="PF22448">
    <property type="entry name" value="RepB_primase_C"/>
    <property type="match status" value="1"/>
</dbReference>
<reference key="1">
    <citation type="journal article" date="1989" name="Gene">
        <title>Complete nucleotide sequence and gene organization of the broad-host-range plasmid RSF1010.</title>
        <authorList>
            <person name="Scholz P."/>
            <person name="Haring V."/>
            <person name="Wittmann-Liebold B."/>
            <person name="Ashman K."/>
            <person name="Bagdasarian M."/>
            <person name="Scherzinger E."/>
        </authorList>
    </citation>
    <scope>NUCLEOTIDE SEQUENCE [GENOMIC DNA]</scope>
    <source>
        <plasmid>IncQ RSF1010</plasmid>
    </source>
</reference>
<reference key="2">
    <citation type="journal article" date="1987" name="Mol. Gen. Genet.">
        <title>Mobilization of the non-conjugative plasmid RSF1010: a genetic and DNA sequence analysis of the mobilization region.</title>
        <authorList>
            <person name="Derbyshire K.M."/>
            <person name="Hatfull G."/>
            <person name="Willetts N."/>
        </authorList>
    </citation>
    <scope>NUCLEOTIDE SEQUENCE [GENOMIC DNA] OF 1-407</scope>
    <source>
        <plasmid>IncQ RSF1010</plasmid>
    </source>
</reference>
<reference key="3">
    <citation type="journal article" date="1992" name="Gene">
        <title>Replication and copy number control of the broad-host-range plasmid RSF1010.</title>
        <authorList>
            <person name="Frey J."/>
            <person name="Bagdasarian M.M."/>
            <person name="Bagdasarian M."/>
        </authorList>
    </citation>
    <scope>NUCLEOTIDE SEQUENCE [GENOMIC DNA] OF 1-400</scope>
    <source>
        <plasmid>IncQ RSF1010</plasmid>
    </source>
</reference>
<reference key="4">
    <citation type="journal article" date="1993" name="Eur. J. Biochem.">
        <title>Purification of the large mobilization protein of plasmid RSF1010 and characterization of its site-specific DNA-cleaving/DNA-joining activity.</title>
        <authorList>
            <person name="Scherzinger E."/>
            <person name="Kruft V."/>
            <person name="Otto S."/>
        </authorList>
    </citation>
    <scope>PROTEIN SEQUENCE OF 2-15 AND 23-31</scope>
    <scope>COFACTOR</scope>
    <source>
        <plasmid>IncQ RSF1010</plasmid>
    </source>
</reference>
<reference key="5">
    <citation type="journal article" date="1992" name="Nucleic Acids Res.">
        <title>In vitro cleavage of double- and single-stranded DNA by plasmid RSF1010-encoded mobilization proteins.</title>
        <authorList>
            <person name="Scherzinger E."/>
            <person name="Lurz R."/>
            <person name="Otto S."/>
            <person name="Dobrinski B."/>
        </authorList>
    </citation>
    <scope>FUNCTION IN DNA CLEAVAGE</scope>
    <scope>COFACTOR</scope>
    <source>
        <plasmid>IncQ RSF1010</plasmid>
    </source>
</reference>
<reference key="6">
    <citation type="journal article" date="1993" name="Nucleic Acids Res.">
        <title>Specific binding of MobA, a plasmid-encoded protein involved in the initiation and termination of conjugal DNA transfer, to single-stranded oriT DNA.</title>
        <authorList>
            <person name="Bhattacharjee M.K."/>
            <person name="Meyer R.J."/>
        </authorList>
    </citation>
    <scope>BINDING TO SINGLE-STRANDED ORIT</scope>
    <source>
        <plasmid>R1162</plasmid>
    </source>
</reference>
<reference key="7">
    <citation type="journal article" date="1996" name="J. Bacteriol.">
        <title>The primase of broad-host-range plasmid R1162 is active in conjugal transfer.</title>
        <authorList>
            <person name="Henderson D."/>
            <person name="Meyer R.J."/>
        </authorList>
    </citation>
    <scope>FUNCTION OF PRIMASE DOMAIN IN CONJUGAL TRANSFER</scope>
    <source>
        <plasmid>R1162</plasmid>
    </source>
</reference>
<reference key="8">
    <citation type="journal article" date="1999" name="J. Bacteriol.">
        <title>The MobA-linked primase is the only replication protein of R1162 required for conjugal mobilization.</title>
        <authorList>
            <person name="Henderson D."/>
            <person name="Meyer R."/>
        </authorList>
    </citation>
    <scope>PRIMASE ACTIVITY</scope>
    <scope>CATALYTIC ACTIVITY</scope>
    <source>
        <plasmid>R1162</plasmid>
    </source>
</reference>
<reference key="9">
    <citation type="journal article" date="2002" name="J. Biol. Chem.">
        <title>MobA, the DNA strand transferase of plasmid R1162: the minimal domain required for DNA processing at the origin of transfer.</title>
        <authorList>
            <person name="Becker E.C."/>
            <person name="Meyer R.J."/>
        </authorList>
    </citation>
    <scope>TRANSFERASE ACTIVITY</scope>
    <source>
        <plasmid>R1162</plasmid>
    </source>
</reference>
<reference key="10">
    <citation type="journal article" date="2003" name="J. Bacteriol.">
        <title>Relaxed specificity of the R1162 nickase: a model for evolution of a system for conjugative mobilization of plasmids.</title>
        <authorList>
            <person name="Becker E.C."/>
            <person name="Meyer R.J."/>
        </authorList>
    </citation>
    <scope>SPECIFICITY OF DNA SEQUENCE FOR CLEAVAGE</scope>
    <source>
        <plasmid>R1162</plasmid>
    </source>
</reference>
<reference key="11">
    <citation type="journal article" date="2007" name="J. Mol. Biol.">
        <title>The structure of the minimal relaxase domain of MobA at 2.1 A resolution.</title>
        <authorList>
            <person name="Monzingo A.F."/>
            <person name="Ozburn A."/>
            <person name="Xia S."/>
            <person name="Meyer R.J."/>
            <person name="Robertus J.D."/>
        </authorList>
    </citation>
    <scope>X-RAY CRYSTALLOGRAPHY (2.1 ANGSTROMS) OF 2-186 IN COMPLEX WITH MANGANESE</scope>
    <scope>REACTION MECHANISM</scope>
    <scope>MUTAGENESIS OF TYR-25; TYR-32; GLU-38; GLU-74 AND GLU-76</scope>
    <source>
        <plasmid>R1162</plasmid>
    </source>
</reference>
<name>MOBA2_ECOLX</name>
<gene>
    <name type="primary">mobA</name>
    <name type="synonym">repB</name>
</gene>
<keyword id="KW-0002">3D-structure</keyword>
<keyword id="KW-0106">Calcium</keyword>
<keyword id="KW-0175">Coiled coil</keyword>
<keyword id="KW-0184">Conjugation</keyword>
<keyword id="KW-0963">Cytoplasm</keyword>
<keyword id="KW-0903">Direct protein sequencing</keyword>
<keyword id="KW-0238">DNA-binding</keyword>
<keyword id="KW-0240">DNA-directed RNA polymerase</keyword>
<keyword id="KW-0413">Isomerase</keyword>
<keyword id="KW-0460">Magnesium</keyword>
<keyword id="KW-0464">Manganese</keyword>
<keyword id="KW-0479">Metal-binding</keyword>
<keyword id="KW-0499">Mobility protein</keyword>
<keyword id="KW-0511">Multifunctional enzyme</keyword>
<keyword id="KW-0614">Plasmid</keyword>
<keyword id="KW-0799">Topoisomerase</keyword>
<keyword id="KW-0804">Transcription</keyword>
<keyword id="KW-0808">Transferase</keyword>
<accession>P07112</accession>
<accession>Q60198</accession>
<protein>
    <recommendedName>
        <fullName>Mobilization protein A</fullName>
    </recommendedName>
    <alternativeName>
        <fullName>DNA strand transferase</fullName>
    </alternativeName>
    <domain>
        <recommendedName>
            <fullName>DNA relaxase</fullName>
            <ecNumber>5.6.2.1</ecNumber>
        </recommendedName>
        <alternativeName>
            <fullName>DNA nickase</fullName>
        </alternativeName>
    </domain>
    <domain>
        <recommendedName>
            <fullName>DNA primase</fullName>
            <ecNumber evidence="3">2.7.7.101</ecNumber>
        </recommendedName>
    </domain>
</protein>
<feature type="initiator methionine" description="Removed" evidence="6">
    <location>
        <position position="1"/>
    </location>
</feature>
<feature type="chain" id="PRO_0000210849" description="Mobilization protein A">
    <location>
        <begin position="2"/>
        <end position="709"/>
    </location>
</feature>
<feature type="region of interest" description="Disordered" evidence="2">
    <location>
        <begin position="1"/>
        <end position="21"/>
    </location>
</feature>
<feature type="region of interest" description="DNA relaxase">
    <location>
        <begin position="2"/>
        <end position="186"/>
    </location>
</feature>
<feature type="region of interest" description="Disordered" evidence="2">
    <location>
        <begin position="251"/>
        <end position="337"/>
    </location>
</feature>
<feature type="region of interest" description="DNA primase">
    <location>
        <begin position="315"/>
        <end position="709"/>
    </location>
</feature>
<feature type="region of interest" description="Disordered" evidence="2">
    <location>
        <begin position="689"/>
        <end position="709"/>
    </location>
</feature>
<feature type="coiled-coil region" evidence="1">
    <location>
        <begin position="567"/>
        <end position="594"/>
    </location>
</feature>
<feature type="compositionally biased region" description="Basic and acidic residues" evidence="2">
    <location>
        <begin position="251"/>
        <end position="261"/>
    </location>
</feature>
<feature type="compositionally biased region" description="Basic and acidic residues" evidence="2">
    <location>
        <begin position="272"/>
        <end position="290"/>
    </location>
</feature>
<feature type="compositionally biased region" description="Basic and acidic residues" evidence="2">
    <location>
        <begin position="324"/>
        <end position="336"/>
    </location>
</feature>
<feature type="compositionally biased region" description="Basic and acidic residues" evidence="2">
    <location>
        <begin position="698"/>
        <end position="709"/>
    </location>
</feature>
<feature type="active site" description="O-(5'-phospho-DNA)-tyrosine intermediate; for relaxase activity">
    <location>
        <position position="25"/>
    </location>
</feature>
<feature type="binding site">
    <location>
        <position position="112"/>
    </location>
    <ligand>
        <name>a divalent metal cation</name>
        <dbReference type="ChEBI" id="CHEBI:60240"/>
    </ligand>
</feature>
<feature type="binding site">
    <location>
        <position position="120"/>
    </location>
    <ligand>
        <name>a divalent metal cation</name>
        <dbReference type="ChEBI" id="CHEBI:60240"/>
    </ligand>
</feature>
<feature type="binding site">
    <location>
        <position position="122"/>
    </location>
    <ligand>
        <name>a divalent metal cation</name>
        <dbReference type="ChEBI" id="CHEBI:60240"/>
    </ligand>
</feature>
<feature type="site" description="Involved in DNA binding" evidence="8">
    <location>
        <position position="70"/>
    </location>
</feature>
<feature type="mutagenesis site" description="99.5% decrease in conjugal transfer frequency." evidence="4">
    <original>Y</original>
    <variation>F</variation>
    <location>
        <position position="25"/>
    </location>
</feature>
<feature type="mutagenesis site" description="No decrease in conjugal transfer frequency." evidence="4">
    <original>Y</original>
    <variation>F</variation>
    <location>
        <position position="32"/>
    </location>
</feature>
<feature type="mutagenesis site" description="No decrease in conjugal transfer frequency." evidence="4">
    <original>E</original>
    <variation>A</variation>
    <location>
        <position position="38"/>
    </location>
</feature>
<feature type="mutagenesis site" description="50% decrease in conjugal transfer frequency. 10-fold decrease in conjugal transfer frequency and great reduction in the rate of DNA cleavage; when associated with A-76." evidence="4">
    <original>E</original>
    <variation>A</variation>
    <location>
        <position position="74"/>
    </location>
</feature>
<feature type="mutagenesis site" description="70% decrease in conjugal transfer frequency." evidence="4">
    <original>E</original>
    <variation>Q</variation>
    <location>
        <position position="74"/>
    </location>
</feature>
<feature type="mutagenesis site" description="No decrease in conjugal transfer frequency. 10-fold decrease in conjugal transfer frequency and great reduction in the rate of DNA cleavage; when associated with A-74." evidence="4">
    <original>E</original>
    <variation>A</variation>
    <location>
        <position position="76"/>
    </location>
</feature>
<feature type="sequence conflict" description="In Ref. 3; AAB22064." evidence="8" ref="3">
    <original>P</original>
    <variation>Q</variation>
    <location>
        <position position="291"/>
    </location>
</feature>
<comment type="function">
    <text evidence="5 7">Part of the relaxosome complex that is responsible for plasmid transfer during conjugation. Locally unwinds DNA and catalyzes the cleavage of one of the DNA strands at oriT. The cleaved strand is then transferred through the dedicated type IV secretion apparatus. MobA remains covalently linked at the 5' end of the strand, and once in the recipient cell, it probably catalyzes the rejoining of the two ends of the strand, re-forming the circular plasmid DNA. The primase activity of MobA is essential for the synthesis of primers that will initiate the DNA replication events necessary to form the double-stranded plasmid in the recipient cell.</text>
</comment>
<comment type="catalytic activity">
    <reaction>
        <text>ATP-independent breakage of single-stranded DNA, followed by passage and rejoining.</text>
        <dbReference type="EC" id="5.6.2.1"/>
    </reaction>
</comment>
<comment type="catalytic activity">
    <reaction evidence="3">
        <text>ssDNA + n NTP = ssDNA/pppN(pN)n-1 hybrid + (n-1) diphosphate.</text>
        <dbReference type="EC" id="2.7.7.101"/>
    </reaction>
</comment>
<comment type="cofactor">
    <cofactor evidence="5 6">
        <name>Mg(2+)</name>
        <dbReference type="ChEBI" id="CHEBI:18420"/>
    </cofactor>
    <cofactor evidence="5 6">
        <name>Mn(2+)</name>
        <dbReference type="ChEBI" id="CHEBI:29035"/>
    </cofactor>
    <cofactor evidence="5 6">
        <name>Ca(2+)</name>
        <dbReference type="ChEBI" id="CHEBI:29108"/>
    </cofactor>
    <cofactor evidence="5 6">
        <name>Ba(2+)</name>
        <dbReference type="ChEBI" id="CHEBI:37136"/>
    </cofactor>
    <text evidence="5 6">Divalent metal cation. Can use Mg(2+), or to a lesser extent, Mn(2+), Ca(2+) or Ba(2+).</text>
</comment>
<comment type="subunit">
    <text evidence="4">Interacts with MobB and MobC to form the relaxosome.</text>
</comment>
<comment type="subcellular location">
    <subcellularLocation>
        <location evidence="8">Cytoplasm</location>
    </subcellularLocation>
</comment>
<comment type="similarity">
    <text evidence="8">Belongs to the MobA/MobL family.</text>
</comment>
<organism>
    <name type="scientific">Escherichia coli</name>
    <dbReference type="NCBI Taxonomy" id="562"/>
    <lineage>
        <taxon>Bacteria</taxon>
        <taxon>Pseudomonadati</taxon>
        <taxon>Pseudomonadota</taxon>
        <taxon>Gammaproteobacteria</taxon>
        <taxon>Enterobacterales</taxon>
        <taxon>Enterobacteriaceae</taxon>
        <taxon>Escherichia</taxon>
    </lineage>
</organism>
<evidence type="ECO:0000255" key="1"/>
<evidence type="ECO:0000256" key="2">
    <source>
        <dbReference type="SAM" id="MobiDB-lite"/>
    </source>
</evidence>
<evidence type="ECO:0000269" key="3">
    <source>
    </source>
</evidence>
<evidence type="ECO:0000269" key="4">
    <source>
    </source>
</evidence>
<evidence type="ECO:0000269" key="5">
    <source>
    </source>
</evidence>
<evidence type="ECO:0000269" key="6">
    <source>
    </source>
</evidence>
<evidence type="ECO:0000269" key="7">
    <source>
    </source>
</evidence>
<evidence type="ECO:0000305" key="8"/>
<sequence>MAIYHLTAKTGSRSGGQSARAKADYIQREGKYARDMDEVLHAESGHMPEFVERPADYWDAADLYERANGRLFKEVEFALPVELTLDQQKALASEFAQHLTGAERLPYTLAIHAGGGENPHCHLMISERINDGIERPAAQWFKRYNGKTPEKGGAQKTEALKPKAWLEQTREAWADHANRALERAGHDARIDHRTLEAQGIERLPGVHLGPNVVEMEGRGIRTDRADVALNIDTANAQIIDLQEYREAIDHERNRQSEEIQRHQRVSGADRTAGPEHGDTGRRSPAGHEPDPAGQRGAGGGVAESPAPDRGGMGGAGQRVAGGSRRGEQRRAERPERVAGVALEAMANRDAGFHDAYGGAADRIVALARPDATDNRGRLDLAALGGPMKNDRTLQAIGRQLKAMGCERFDIGVRDATTGQMMNREWSAAEVLQNTPWLKRMNAQGNDVYIRPAEQERHGLVLVDDLSEFDLDDMKAEGREPALVVETSPKNYQAWVKVADAAGGELRGQIARTLASEYDADPASADSRHYGRLAGFTNRKDKHTTRAGYQPWVLLRESKGKTATAGPALVQQAGQQIEQAQRQQEKARRLASLELPERQLSRHRRTALDEYRSEMAGLVKRFGDDLSKCDFIAAQKLASRGRSAEEIGKAMAEASPALAERKPGHEADYIERTVSKVMGLPSVQLARAELARAPAPRQRGMDRGGPDFSM</sequence>
<geneLocation type="plasmid">
    <name>IncQ RSF1010</name>
</geneLocation>
<geneLocation type="plasmid">
    <name>R1162</name>
</geneLocation>
<proteinExistence type="evidence at protein level"/>